<dbReference type="EC" id="3.6.1.-" evidence="1"/>
<dbReference type="EMBL" id="CP000964">
    <property type="protein sequence ID" value="ACI10945.1"/>
    <property type="molecule type" value="Genomic_DNA"/>
</dbReference>
<dbReference type="SMR" id="B5Y0T3"/>
<dbReference type="KEGG" id="kpe:KPK_4274"/>
<dbReference type="HOGENOM" id="CLU_044146_5_2_6"/>
<dbReference type="Proteomes" id="UP000001734">
    <property type="component" value="Chromosome"/>
</dbReference>
<dbReference type="GO" id="GO:0002145">
    <property type="term" value="F:4-amino-5-hydroxymethyl-2-methylpyrimidine diphosphatase activity"/>
    <property type="evidence" value="ECO:0007669"/>
    <property type="project" value="RHEA"/>
</dbReference>
<dbReference type="GO" id="GO:0000287">
    <property type="term" value="F:magnesium ion binding"/>
    <property type="evidence" value="ECO:0000250"/>
    <property type="project" value="UniProtKB"/>
</dbReference>
<dbReference type="GO" id="GO:0016791">
    <property type="term" value="F:phosphatase activity"/>
    <property type="evidence" value="ECO:0000250"/>
    <property type="project" value="UniProtKB"/>
</dbReference>
<dbReference type="CDD" id="cd07516">
    <property type="entry name" value="HAD_Pase"/>
    <property type="match status" value="1"/>
</dbReference>
<dbReference type="FunFam" id="3.30.1240.10:FF:000002">
    <property type="entry name" value="HMP-PP phosphatase"/>
    <property type="match status" value="1"/>
</dbReference>
<dbReference type="Gene3D" id="3.30.1240.10">
    <property type="match status" value="1"/>
</dbReference>
<dbReference type="Gene3D" id="3.40.50.1000">
    <property type="entry name" value="HAD superfamily/HAD-like"/>
    <property type="match status" value="1"/>
</dbReference>
<dbReference type="HAMAP" id="MF_01847">
    <property type="entry name" value="HMP_PP_phosphat"/>
    <property type="match status" value="1"/>
</dbReference>
<dbReference type="InterPro" id="IPR000150">
    <property type="entry name" value="Cof"/>
</dbReference>
<dbReference type="InterPro" id="IPR036412">
    <property type="entry name" value="HAD-like_sf"/>
</dbReference>
<dbReference type="InterPro" id="IPR006379">
    <property type="entry name" value="HAD-SF_hydro_IIB"/>
</dbReference>
<dbReference type="InterPro" id="IPR023214">
    <property type="entry name" value="HAD_sf"/>
</dbReference>
<dbReference type="InterPro" id="IPR023938">
    <property type="entry name" value="HMP-PP_phosphatase"/>
</dbReference>
<dbReference type="NCBIfam" id="TIGR00099">
    <property type="entry name" value="Cof-subfamily"/>
    <property type="match status" value="1"/>
</dbReference>
<dbReference type="NCBIfam" id="TIGR01484">
    <property type="entry name" value="HAD-SF-IIB"/>
    <property type="match status" value="1"/>
</dbReference>
<dbReference type="NCBIfam" id="NF011705">
    <property type="entry name" value="PRK15126.1"/>
    <property type="match status" value="1"/>
</dbReference>
<dbReference type="PANTHER" id="PTHR47267">
    <property type="match status" value="1"/>
</dbReference>
<dbReference type="PANTHER" id="PTHR47267:SF2">
    <property type="entry name" value="HMP-PP PHOSPHATASE"/>
    <property type="match status" value="1"/>
</dbReference>
<dbReference type="Pfam" id="PF08282">
    <property type="entry name" value="Hydrolase_3"/>
    <property type="match status" value="1"/>
</dbReference>
<dbReference type="SFLD" id="SFLDG01140">
    <property type="entry name" value="C2.B:_Phosphomannomutase_and_P"/>
    <property type="match status" value="1"/>
</dbReference>
<dbReference type="SFLD" id="SFLDS00003">
    <property type="entry name" value="Haloacid_Dehalogenase"/>
    <property type="match status" value="1"/>
</dbReference>
<dbReference type="SUPFAM" id="SSF56784">
    <property type="entry name" value="HAD-like"/>
    <property type="match status" value="1"/>
</dbReference>
<dbReference type="PROSITE" id="PS01228">
    <property type="entry name" value="COF_1"/>
    <property type="match status" value="1"/>
</dbReference>
<dbReference type="PROSITE" id="PS01229">
    <property type="entry name" value="COF_2"/>
    <property type="match status" value="1"/>
</dbReference>
<name>COF_KLEP3</name>
<organism>
    <name type="scientific">Klebsiella pneumoniae (strain 342)</name>
    <dbReference type="NCBI Taxonomy" id="507522"/>
    <lineage>
        <taxon>Bacteria</taxon>
        <taxon>Pseudomonadati</taxon>
        <taxon>Pseudomonadota</taxon>
        <taxon>Gammaproteobacteria</taxon>
        <taxon>Enterobacterales</taxon>
        <taxon>Enterobacteriaceae</taxon>
        <taxon>Klebsiella/Raoultella group</taxon>
        <taxon>Klebsiella</taxon>
        <taxon>Klebsiella pneumoniae complex</taxon>
    </lineage>
</organism>
<feature type="chain" id="PRO_1000188505" description="HMP-PP phosphatase">
    <location>
        <begin position="1"/>
        <end position="272"/>
    </location>
</feature>
<feature type="active site" description="Nucleophile" evidence="1">
    <location>
        <position position="8"/>
    </location>
</feature>
<feature type="binding site" evidence="1">
    <location>
        <position position="8"/>
    </location>
    <ligand>
        <name>Mg(2+)</name>
        <dbReference type="ChEBI" id="CHEBI:18420"/>
    </ligand>
</feature>
<feature type="binding site" evidence="1">
    <location>
        <position position="10"/>
    </location>
    <ligand>
        <name>Mg(2+)</name>
        <dbReference type="ChEBI" id="CHEBI:18420"/>
    </ligand>
</feature>
<feature type="binding site" evidence="1">
    <location>
        <position position="212"/>
    </location>
    <ligand>
        <name>Mg(2+)</name>
        <dbReference type="ChEBI" id="CHEBI:18420"/>
    </ligand>
</feature>
<evidence type="ECO:0000255" key="1">
    <source>
        <dbReference type="HAMAP-Rule" id="MF_01847"/>
    </source>
</evidence>
<protein>
    <recommendedName>
        <fullName evidence="1">HMP-PP phosphatase</fullName>
        <ecNumber evidence="1">3.6.1.-</ecNumber>
    </recommendedName>
</protein>
<sequence length="272" mass="30445">MAKLAAFDMDGTLLMPDHRLGEQTLTALKRLRERNITLTFATGRHVLEMHHVIGEFSLDAFLITGNGTRIHSLEGEELYRQDLAPEAAEAVLHSKWDTQASMHVFNDGGWFTGQARPELLKAHAFSGFHYQLCDPKRMPAHHVTKICFCGDHDDLRRLRIQLNETLGDRAFLCFSAMDCLEVLPVGCNKGAALAVLSQHLGFTLQECMAFGDAMNDREMLGSVGRGFIMGNAMPQLKAELPHLQVIGDCRHQAVSHFLTHWLDNPDLPYSPE</sequence>
<gene>
    <name evidence="1" type="primary">cof</name>
    <name type="ordered locus">KPK_4274</name>
</gene>
<keyword id="KW-0378">Hydrolase</keyword>
<keyword id="KW-0460">Magnesium</keyword>
<keyword id="KW-0479">Metal-binding</keyword>
<comment type="function">
    <text evidence="1">Catalyzes the hydrolysis of 4-amino-2-methyl-5-hydroxymethylpyrimidine pyrophosphate (HMP-PP) to 4-amino-2-methyl-5-hydroxymethylpyrimidine phosphate (HMP-P).</text>
</comment>
<comment type="catalytic activity">
    <reaction evidence="1">
        <text>4-amino-2-methyl-5-(diphosphooxymethyl)pyrimidine + H2O = 4-amino-2-methyl-5-(phosphooxymethyl)pyrimidine + phosphate + H(+)</text>
        <dbReference type="Rhea" id="RHEA:27914"/>
        <dbReference type="ChEBI" id="CHEBI:15377"/>
        <dbReference type="ChEBI" id="CHEBI:15378"/>
        <dbReference type="ChEBI" id="CHEBI:43474"/>
        <dbReference type="ChEBI" id="CHEBI:57841"/>
        <dbReference type="ChEBI" id="CHEBI:58354"/>
    </reaction>
</comment>
<comment type="cofactor">
    <cofactor evidence="1">
        <name>Mg(2+)</name>
        <dbReference type="ChEBI" id="CHEBI:18420"/>
    </cofactor>
</comment>
<comment type="similarity">
    <text evidence="1">Belongs to the HAD-like hydrolase superfamily. Cof family.</text>
</comment>
<accession>B5Y0T3</accession>
<reference key="1">
    <citation type="journal article" date="2008" name="PLoS Genet.">
        <title>Complete genome sequence of the N2-fixing broad host range endophyte Klebsiella pneumoniae 342 and virulence predictions verified in mice.</title>
        <authorList>
            <person name="Fouts D.E."/>
            <person name="Tyler H.L."/>
            <person name="DeBoy R.T."/>
            <person name="Daugherty S."/>
            <person name="Ren Q."/>
            <person name="Badger J.H."/>
            <person name="Durkin A.S."/>
            <person name="Huot H."/>
            <person name="Shrivastava S."/>
            <person name="Kothari S."/>
            <person name="Dodson R.J."/>
            <person name="Mohamoud Y."/>
            <person name="Khouri H."/>
            <person name="Roesch L.F.W."/>
            <person name="Krogfelt K.A."/>
            <person name="Struve C."/>
            <person name="Triplett E.W."/>
            <person name="Methe B.A."/>
        </authorList>
    </citation>
    <scope>NUCLEOTIDE SEQUENCE [LARGE SCALE GENOMIC DNA]</scope>
    <source>
        <strain>342</strain>
    </source>
</reference>
<proteinExistence type="inferred from homology"/>